<feature type="chain" id="PRO_1000136496" description="Putative phosphoenolpyruvate synthase regulatory protein">
    <location>
        <begin position="1"/>
        <end position="270"/>
    </location>
</feature>
<feature type="binding site" evidence="1">
    <location>
        <begin position="150"/>
        <end position="157"/>
    </location>
    <ligand>
        <name>ADP</name>
        <dbReference type="ChEBI" id="CHEBI:456216"/>
    </ligand>
</feature>
<protein>
    <recommendedName>
        <fullName evidence="1">Putative phosphoenolpyruvate synthase regulatory protein</fullName>
        <shortName evidence="1">PEP synthase regulatory protein</shortName>
        <shortName evidence="1">PSRP</shortName>
        <ecNumber evidence="1">2.7.11.33</ecNumber>
        <ecNumber evidence="1">2.7.4.28</ecNumber>
    </recommendedName>
    <alternativeName>
        <fullName evidence="1">Pyruvate, water dikinase regulatory protein</fullName>
    </alternativeName>
</protein>
<dbReference type="EC" id="2.7.11.33" evidence="1"/>
<dbReference type="EC" id="2.7.4.28" evidence="1"/>
<dbReference type="EMBL" id="CP000472">
    <property type="protein sequence ID" value="ACJ28612.1"/>
    <property type="molecule type" value="Genomic_DNA"/>
</dbReference>
<dbReference type="RefSeq" id="WP_020911990.1">
    <property type="nucleotide sequence ID" value="NC_011566.1"/>
</dbReference>
<dbReference type="SMR" id="B8CLG1"/>
<dbReference type="STRING" id="225849.swp_1850"/>
<dbReference type="KEGG" id="swp:swp_1850"/>
<dbReference type="eggNOG" id="COG1806">
    <property type="taxonomic scope" value="Bacteria"/>
</dbReference>
<dbReference type="HOGENOM" id="CLU_046206_1_0_6"/>
<dbReference type="OrthoDB" id="9782201at2"/>
<dbReference type="Proteomes" id="UP000000753">
    <property type="component" value="Chromosome"/>
</dbReference>
<dbReference type="GO" id="GO:0043531">
    <property type="term" value="F:ADP binding"/>
    <property type="evidence" value="ECO:0007669"/>
    <property type="project" value="UniProtKB-UniRule"/>
</dbReference>
<dbReference type="GO" id="GO:0005524">
    <property type="term" value="F:ATP binding"/>
    <property type="evidence" value="ECO:0007669"/>
    <property type="project" value="InterPro"/>
</dbReference>
<dbReference type="GO" id="GO:0016776">
    <property type="term" value="F:phosphotransferase activity, phosphate group as acceptor"/>
    <property type="evidence" value="ECO:0007669"/>
    <property type="project" value="UniProtKB-UniRule"/>
</dbReference>
<dbReference type="GO" id="GO:0004674">
    <property type="term" value="F:protein serine/threonine kinase activity"/>
    <property type="evidence" value="ECO:0007669"/>
    <property type="project" value="UniProtKB-UniRule"/>
</dbReference>
<dbReference type="HAMAP" id="MF_01062">
    <property type="entry name" value="PSRP"/>
    <property type="match status" value="1"/>
</dbReference>
<dbReference type="InterPro" id="IPR005177">
    <property type="entry name" value="Kinase-pyrophosphorylase"/>
</dbReference>
<dbReference type="InterPro" id="IPR026530">
    <property type="entry name" value="PSRP"/>
</dbReference>
<dbReference type="NCBIfam" id="NF003742">
    <property type="entry name" value="PRK05339.1"/>
    <property type="match status" value="1"/>
</dbReference>
<dbReference type="PANTHER" id="PTHR31756">
    <property type="entry name" value="PYRUVATE, PHOSPHATE DIKINASE REGULATORY PROTEIN 1, CHLOROPLASTIC"/>
    <property type="match status" value="1"/>
</dbReference>
<dbReference type="PANTHER" id="PTHR31756:SF3">
    <property type="entry name" value="PYRUVATE, PHOSPHATE DIKINASE REGULATORY PROTEIN 1, CHLOROPLASTIC"/>
    <property type="match status" value="1"/>
</dbReference>
<dbReference type="Pfam" id="PF03618">
    <property type="entry name" value="Kinase-PPPase"/>
    <property type="match status" value="1"/>
</dbReference>
<proteinExistence type="inferred from homology"/>
<evidence type="ECO:0000255" key="1">
    <source>
        <dbReference type="HAMAP-Rule" id="MF_01062"/>
    </source>
</evidence>
<sequence>MLRKVFYISDGTAITAEVFGHAVLSQFPLEFDALTIPFVETEKKAEAVKAQINDCFITTGERPLVFHSIVKAEIRDIIYSSEGLDYDFLNTFVAPLEKQLGMPATPALHRTHGKTNDSYEARIEAINYAMENDDGQTMKHMDKADLILLGVSRCGKTPSSLYLSMQFGIKAANYPFTEDDMDNLKLPDALKRNKDKLFGLTIDPVRLHEIRQSRMSNSRYSSMRQCRMEVKEVEMMYKRERIPFVNTTNHSVEEIATKILEATSLERHMF</sequence>
<reference key="1">
    <citation type="journal article" date="2008" name="PLoS ONE">
        <title>Environmental adaptation: genomic analysis of the piezotolerant and psychrotolerant deep-sea iron reducing bacterium Shewanella piezotolerans WP3.</title>
        <authorList>
            <person name="Wang F."/>
            <person name="Wang J."/>
            <person name="Jian H."/>
            <person name="Zhang B."/>
            <person name="Li S."/>
            <person name="Wang F."/>
            <person name="Zeng X."/>
            <person name="Gao L."/>
            <person name="Bartlett D.H."/>
            <person name="Yu J."/>
            <person name="Hu S."/>
            <person name="Xiao X."/>
        </authorList>
    </citation>
    <scope>NUCLEOTIDE SEQUENCE [LARGE SCALE GENOMIC DNA]</scope>
    <source>
        <strain>WP3 / JCM 13877</strain>
    </source>
</reference>
<accession>B8CLG1</accession>
<name>PSRP_SHEPW</name>
<keyword id="KW-0418">Kinase</keyword>
<keyword id="KW-0547">Nucleotide-binding</keyword>
<keyword id="KW-0723">Serine/threonine-protein kinase</keyword>
<keyword id="KW-0808">Transferase</keyword>
<comment type="function">
    <text evidence="1">Bifunctional serine/threonine kinase and phosphorylase involved in the regulation of the phosphoenolpyruvate synthase (PEPS) by catalyzing its phosphorylation/dephosphorylation.</text>
</comment>
<comment type="catalytic activity">
    <reaction evidence="1">
        <text>[pyruvate, water dikinase] + ADP = [pyruvate, water dikinase]-phosphate + AMP + H(+)</text>
        <dbReference type="Rhea" id="RHEA:46020"/>
        <dbReference type="Rhea" id="RHEA-COMP:11425"/>
        <dbReference type="Rhea" id="RHEA-COMP:11426"/>
        <dbReference type="ChEBI" id="CHEBI:15378"/>
        <dbReference type="ChEBI" id="CHEBI:43176"/>
        <dbReference type="ChEBI" id="CHEBI:68546"/>
        <dbReference type="ChEBI" id="CHEBI:456215"/>
        <dbReference type="ChEBI" id="CHEBI:456216"/>
        <dbReference type="EC" id="2.7.11.33"/>
    </reaction>
</comment>
<comment type="catalytic activity">
    <reaction evidence="1">
        <text>[pyruvate, water dikinase]-phosphate + phosphate + H(+) = [pyruvate, water dikinase] + diphosphate</text>
        <dbReference type="Rhea" id="RHEA:48580"/>
        <dbReference type="Rhea" id="RHEA-COMP:11425"/>
        <dbReference type="Rhea" id="RHEA-COMP:11426"/>
        <dbReference type="ChEBI" id="CHEBI:15378"/>
        <dbReference type="ChEBI" id="CHEBI:33019"/>
        <dbReference type="ChEBI" id="CHEBI:43176"/>
        <dbReference type="ChEBI" id="CHEBI:43474"/>
        <dbReference type="ChEBI" id="CHEBI:68546"/>
        <dbReference type="EC" id="2.7.4.28"/>
    </reaction>
</comment>
<comment type="similarity">
    <text evidence="1">Belongs to the pyruvate, phosphate/water dikinase regulatory protein family. PSRP subfamily.</text>
</comment>
<gene>
    <name type="ordered locus">swp_1850</name>
</gene>
<organism>
    <name type="scientific">Shewanella piezotolerans (strain WP3 / JCM 13877)</name>
    <dbReference type="NCBI Taxonomy" id="225849"/>
    <lineage>
        <taxon>Bacteria</taxon>
        <taxon>Pseudomonadati</taxon>
        <taxon>Pseudomonadota</taxon>
        <taxon>Gammaproteobacteria</taxon>
        <taxon>Alteromonadales</taxon>
        <taxon>Shewanellaceae</taxon>
        <taxon>Shewanella</taxon>
    </lineage>
</organism>